<evidence type="ECO:0000250" key="1">
    <source>
        <dbReference type="UniProtKB" id="Q13510"/>
    </source>
</evidence>
<evidence type="ECO:0000255" key="2"/>
<evidence type="ECO:0000269" key="3">
    <source>
    </source>
</evidence>
<evidence type="ECO:0000303" key="4">
    <source>
    </source>
</evidence>
<evidence type="ECO:0000305" key="5"/>
<evidence type="ECO:0000305" key="6">
    <source>
    </source>
</evidence>
<evidence type="ECO:0000312" key="7">
    <source>
        <dbReference type="Proteomes" id="UP000261681"/>
    </source>
</evidence>
<evidence type="ECO:0000312" key="8">
    <source>
        <dbReference type="RefSeq" id="XP_007174053.1"/>
    </source>
</evidence>
<evidence type="ECO:0007744" key="9">
    <source>
        <dbReference type="PDB" id="5U84"/>
    </source>
</evidence>
<evidence type="ECO:0007829" key="10">
    <source>
        <dbReference type="PDB" id="5U84"/>
    </source>
</evidence>
<gene>
    <name evidence="8" type="primary">ASAH1</name>
</gene>
<dbReference type="EC" id="3.5.1.23" evidence="1"/>
<dbReference type="EC" id="3.5.1.-" evidence="1"/>
<dbReference type="EMBL" id="KI537508">
    <property type="status" value="NOT_ANNOTATED_CDS"/>
    <property type="molecule type" value="Genomic_DNA"/>
</dbReference>
<dbReference type="RefSeq" id="XP_007174053.1">
    <property type="nucleotide sequence ID" value="XM_007173991.1"/>
</dbReference>
<dbReference type="PDB" id="5U84">
    <property type="method" value="X-ray"/>
    <property type="resolution" value="2.34 A"/>
    <property type="chains" value="A/B=22-395"/>
</dbReference>
<dbReference type="PDBsum" id="5U84"/>
<dbReference type="SMR" id="A0A383ZFX3"/>
<dbReference type="FunCoup" id="A0A383ZFX3">
    <property type="interactions" value="784"/>
</dbReference>
<dbReference type="STRING" id="310752.A0A383ZFX3"/>
<dbReference type="GlyCosmos" id="A0A383ZFX3">
    <property type="glycosylation" value="4 sites, No reported glycans"/>
</dbReference>
<dbReference type="iPTMnet" id="A0A383ZFX3"/>
<dbReference type="GeneID" id="103004383"/>
<dbReference type="KEGG" id="bacu:103004383"/>
<dbReference type="CTD" id="427"/>
<dbReference type="InParanoid" id="A0A383ZFX3"/>
<dbReference type="UniPathway" id="UPA00222"/>
<dbReference type="Proteomes" id="UP000261681">
    <property type="component" value="Unplaced"/>
</dbReference>
<dbReference type="GO" id="GO:0005576">
    <property type="term" value="C:extracellular region"/>
    <property type="evidence" value="ECO:0007669"/>
    <property type="project" value="UniProtKB-SubCell"/>
</dbReference>
<dbReference type="GO" id="GO:0005764">
    <property type="term" value="C:lysosome"/>
    <property type="evidence" value="ECO:0007669"/>
    <property type="project" value="UniProtKB-SubCell"/>
</dbReference>
<dbReference type="GO" id="GO:0016020">
    <property type="term" value="C:membrane"/>
    <property type="evidence" value="ECO:0007669"/>
    <property type="project" value="GOC"/>
</dbReference>
<dbReference type="GO" id="GO:0017064">
    <property type="term" value="F:fatty acid amide hydrolase activity"/>
    <property type="evidence" value="ECO:0007669"/>
    <property type="project" value="InterPro"/>
</dbReference>
<dbReference type="GO" id="GO:0017040">
    <property type="term" value="F:N-acylsphingosine amidohydrolase activity"/>
    <property type="evidence" value="ECO:0007669"/>
    <property type="project" value="UniProtKB-EC"/>
</dbReference>
<dbReference type="GO" id="GO:0006631">
    <property type="term" value="P:fatty acid metabolic process"/>
    <property type="evidence" value="ECO:0007669"/>
    <property type="project" value="InterPro"/>
</dbReference>
<dbReference type="GO" id="GO:0006665">
    <property type="term" value="P:sphingolipid metabolic process"/>
    <property type="evidence" value="ECO:0007669"/>
    <property type="project" value="UniProtKB-UniPathway"/>
</dbReference>
<dbReference type="CDD" id="cd01903">
    <property type="entry name" value="Ntn_AC_NAAA"/>
    <property type="match status" value="1"/>
</dbReference>
<dbReference type="FunFam" id="3.60.60.10:FF:000002">
    <property type="entry name" value="N-acylsphingosine amidohydrolase 1"/>
    <property type="match status" value="1"/>
</dbReference>
<dbReference type="Gene3D" id="3.60.60.10">
    <property type="entry name" value="Penicillin V Acylase, Chain A"/>
    <property type="match status" value="1"/>
</dbReference>
<dbReference type="InterPro" id="IPR016699">
    <property type="entry name" value="Acid_ceramidase-like"/>
</dbReference>
<dbReference type="InterPro" id="IPR029130">
    <property type="entry name" value="Acid_ceramidase_N"/>
</dbReference>
<dbReference type="InterPro" id="IPR029132">
    <property type="entry name" value="CBAH/NAAA_C"/>
</dbReference>
<dbReference type="PANTHER" id="PTHR28583">
    <property type="entry name" value="ACID AMIDASE"/>
    <property type="match status" value="1"/>
</dbReference>
<dbReference type="PANTHER" id="PTHR28583:SF1">
    <property type="entry name" value="ACID CERAMIDASE"/>
    <property type="match status" value="1"/>
</dbReference>
<dbReference type="Pfam" id="PF02275">
    <property type="entry name" value="CBAH"/>
    <property type="match status" value="1"/>
</dbReference>
<dbReference type="Pfam" id="PF15508">
    <property type="entry name" value="NAAA-beta"/>
    <property type="match status" value="1"/>
</dbReference>
<dbReference type="PIRSF" id="PIRSF017632">
    <property type="entry name" value="Acid_ceramidase-like"/>
    <property type="match status" value="1"/>
</dbReference>
<proteinExistence type="evidence at protein level"/>
<comment type="function">
    <text evidence="1">Lysosomal ceramidase that hydrolyzes sphingolipid ceramides into sphingosine and free fatty acids at acidic pH (By similarity). Ceramides, sphingosine, and its phosphorylated form sphingosine-1-phosphate are bioactive lipids that mediate cellular signaling pathways regulating several biological processes including cell proliferation, apoptosis and differentiation (By similarity). Has a higher catalytic efficiency towards C12-ceramides versus other ceramides (By similarity). Also catalyzes the reverse reaction allowing the synthesis of ceramides from fatty acids and sphingosine (By similarity). For the reverse synthetic reaction, the natural sphingosine D-erythro isomer is more efficiently utilized as a substrate compared to D-erythro-dihydrosphingosine and D-erythro-phytosphingosine, while the fatty acids with chain lengths of 12 or 14 carbons are the most efficiently used (By similarity). Also has an N-acylethanolamine hydrolase activity (By similarity). By regulating the levels of ceramides, sphingosine and sphingosine-1-phosphate in the epidermis, mediates the calcium-induced differentiation of epidermal keratinocytes (By similarity). Also indirectly regulates tumor necrosis factor/TNF-induced apoptosis (By similarity). By regulating the intracellular balance between ceramides and sphingosine, in adrenocortical cells, probably also acts as a regulator of steroidogenesis (By similarity).</text>
</comment>
<comment type="catalytic activity">
    <reaction evidence="1">
        <text>an N-acylsphing-4-enine + H2O = sphing-4-enine + a fatty acid</text>
        <dbReference type="Rhea" id="RHEA:20856"/>
        <dbReference type="ChEBI" id="CHEBI:15377"/>
        <dbReference type="ChEBI" id="CHEBI:28868"/>
        <dbReference type="ChEBI" id="CHEBI:52639"/>
        <dbReference type="ChEBI" id="CHEBI:57756"/>
        <dbReference type="EC" id="3.5.1.23"/>
    </reaction>
</comment>
<comment type="catalytic activity">
    <reaction evidence="1">
        <text>N-dodecanoylsphing-4-enine + H2O = dodecanoate + sphing-4-enine</text>
        <dbReference type="Rhea" id="RHEA:41291"/>
        <dbReference type="ChEBI" id="CHEBI:15377"/>
        <dbReference type="ChEBI" id="CHEBI:18262"/>
        <dbReference type="ChEBI" id="CHEBI:57756"/>
        <dbReference type="ChEBI" id="CHEBI:72956"/>
    </reaction>
    <physiologicalReaction direction="left-to-right" evidence="1">
        <dbReference type="Rhea" id="RHEA:41292"/>
    </physiologicalReaction>
    <physiologicalReaction direction="right-to-left" evidence="1">
        <dbReference type="Rhea" id="RHEA:41293"/>
    </physiologicalReaction>
</comment>
<comment type="catalytic activity">
    <reaction evidence="1">
        <text>N-tetradecanoylsphing-4-enine + H2O = tetradecanoate + sphing-4-enine</text>
        <dbReference type="Rhea" id="RHEA:41287"/>
        <dbReference type="ChEBI" id="CHEBI:15377"/>
        <dbReference type="ChEBI" id="CHEBI:30807"/>
        <dbReference type="ChEBI" id="CHEBI:57756"/>
        <dbReference type="ChEBI" id="CHEBI:72957"/>
    </reaction>
    <physiologicalReaction direction="right-to-left" evidence="1">
        <dbReference type="Rhea" id="RHEA:41289"/>
    </physiologicalReaction>
</comment>
<comment type="catalytic activity">
    <reaction evidence="1">
        <text>N-hexadecanoylsphing-4-enine + H2O = sphing-4-enine + hexadecanoate</text>
        <dbReference type="Rhea" id="RHEA:38891"/>
        <dbReference type="ChEBI" id="CHEBI:7896"/>
        <dbReference type="ChEBI" id="CHEBI:15377"/>
        <dbReference type="ChEBI" id="CHEBI:57756"/>
        <dbReference type="ChEBI" id="CHEBI:72959"/>
    </reaction>
    <physiologicalReaction direction="left-to-right" evidence="1">
        <dbReference type="Rhea" id="RHEA:38892"/>
    </physiologicalReaction>
    <physiologicalReaction direction="right-to-left" evidence="1">
        <dbReference type="Rhea" id="RHEA:38893"/>
    </physiologicalReaction>
</comment>
<comment type="catalytic activity">
    <reaction evidence="1">
        <text>N-octadecanoylsphing-4-enine + H2O = sphing-4-enine + octadecanoate</text>
        <dbReference type="Rhea" id="RHEA:41279"/>
        <dbReference type="ChEBI" id="CHEBI:15377"/>
        <dbReference type="ChEBI" id="CHEBI:25629"/>
        <dbReference type="ChEBI" id="CHEBI:57756"/>
        <dbReference type="ChEBI" id="CHEBI:72961"/>
    </reaction>
    <physiologicalReaction direction="left-to-right" evidence="1">
        <dbReference type="Rhea" id="RHEA:41280"/>
    </physiologicalReaction>
    <physiologicalReaction direction="right-to-left" evidence="1">
        <dbReference type="Rhea" id="RHEA:41281"/>
    </physiologicalReaction>
</comment>
<comment type="catalytic activity">
    <reaction evidence="1">
        <text>N-dodecanoyl-(4R)-hydroxysphinganine + H2O = (4R)-hydroxysphinganine + dodecanoate</text>
        <dbReference type="Rhea" id="RHEA:41303"/>
        <dbReference type="ChEBI" id="CHEBI:15377"/>
        <dbReference type="ChEBI" id="CHEBI:18262"/>
        <dbReference type="ChEBI" id="CHEBI:64124"/>
        <dbReference type="ChEBI" id="CHEBI:78001"/>
    </reaction>
    <physiologicalReaction direction="right-to-left" evidence="1">
        <dbReference type="Rhea" id="RHEA:41305"/>
    </physiologicalReaction>
</comment>
<comment type="catalytic activity">
    <reaction evidence="1">
        <text>N-(dodecanoyl)-sphinganine + H2O = dodecanoate + sphinganine</text>
        <dbReference type="Rhea" id="RHEA:45448"/>
        <dbReference type="ChEBI" id="CHEBI:15377"/>
        <dbReference type="ChEBI" id="CHEBI:18262"/>
        <dbReference type="ChEBI" id="CHEBI:57817"/>
        <dbReference type="ChEBI" id="CHEBI:85261"/>
    </reaction>
    <physiologicalReaction direction="right-to-left" evidence="1">
        <dbReference type="Rhea" id="RHEA:45450"/>
    </physiologicalReaction>
</comment>
<comment type="catalytic activity">
    <reaction evidence="1">
        <text>N-(acetyl)-sphing-4-enine + H2O = sphing-4-enine + acetate</text>
        <dbReference type="Rhea" id="RHEA:58484"/>
        <dbReference type="ChEBI" id="CHEBI:15377"/>
        <dbReference type="ChEBI" id="CHEBI:30089"/>
        <dbReference type="ChEBI" id="CHEBI:46979"/>
        <dbReference type="ChEBI" id="CHEBI:57756"/>
    </reaction>
    <physiologicalReaction direction="left-to-right" evidence="1">
        <dbReference type="Rhea" id="RHEA:58485"/>
    </physiologicalReaction>
</comment>
<comment type="catalytic activity">
    <reaction evidence="1">
        <text>N-(hexanoyl)sphing-4-enine + H2O = hexanoate + sphing-4-enine</text>
        <dbReference type="Rhea" id="RHEA:41295"/>
        <dbReference type="ChEBI" id="CHEBI:15377"/>
        <dbReference type="ChEBI" id="CHEBI:17120"/>
        <dbReference type="ChEBI" id="CHEBI:57756"/>
        <dbReference type="ChEBI" id="CHEBI:63867"/>
    </reaction>
    <physiologicalReaction direction="left-to-right" evidence="1">
        <dbReference type="Rhea" id="RHEA:41296"/>
    </physiologicalReaction>
</comment>
<comment type="catalytic activity">
    <reaction evidence="1">
        <text>N-octanoylsphing-4-enine + H2O = octanoate + sphing-4-enine</text>
        <dbReference type="Rhea" id="RHEA:45092"/>
        <dbReference type="ChEBI" id="CHEBI:15377"/>
        <dbReference type="ChEBI" id="CHEBI:25646"/>
        <dbReference type="ChEBI" id="CHEBI:45815"/>
        <dbReference type="ChEBI" id="CHEBI:57756"/>
    </reaction>
    <physiologicalReaction direction="left-to-right" evidence="1">
        <dbReference type="Rhea" id="RHEA:45093"/>
    </physiologicalReaction>
</comment>
<comment type="catalytic activity">
    <reaction evidence="1">
        <text>N-(9Z-octadecenoyl)-sphing-4-enine + H2O = sphing-4-enine + (9Z)-octadecenoate</text>
        <dbReference type="Rhea" id="RHEA:41299"/>
        <dbReference type="ChEBI" id="CHEBI:15377"/>
        <dbReference type="ChEBI" id="CHEBI:30823"/>
        <dbReference type="ChEBI" id="CHEBI:57756"/>
        <dbReference type="ChEBI" id="CHEBI:77996"/>
    </reaction>
    <physiologicalReaction direction="left-to-right" evidence="1">
        <dbReference type="Rhea" id="RHEA:41300"/>
    </physiologicalReaction>
</comment>
<comment type="catalytic activity">
    <reaction evidence="1">
        <text>N-dodecanoylethanolamine + H2O = dodecanoate + ethanolamine</text>
        <dbReference type="Rhea" id="RHEA:45456"/>
        <dbReference type="ChEBI" id="CHEBI:15377"/>
        <dbReference type="ChEBI" id="CHEBI:18262"/>
        <dbReference type="ChEBI" id="CHEBI:57603"/>
        <dbReference type="ChEBI" id="CHEBI:85263"/>
    </reaction>
    <physiologicalReaction direction="left-to-right" evidence="1">
        <dbReference type="Rhea" id="RHEA:45457"/>
    </physiologicalReaction>
</comment>
<comment type="pathway">
    <text evidence="1">Lipid metabolism; sphingolipid metabolism.</text>
</comment>
<comment type="subunit">
    <text evidence="3">Heterodimer; disulfide-linked. The heterodimer is composed of the disulfide-linked alpha and beta chains produced by autocatalytic cleavage of the precursor.</text>
</comment>
<comment type="subcellular location">
    <subcellularLocation>
        <location evidence="1">Lysosome</location>
    </subcellularLocation>
    <subcellularLocation>
        <location evidence="1">Secreted</location>
    </subcellularLocation>
    <text evidence="1">Secretion is extremely low and localization to lysosomes is mannose-6-phosphate receptor-dependent.</text>
</comment>
<comment type="PTM">
    <text evidence="3">N-glycosylated.</text>
</comment>
<comment type="PTM">
    <text evidence="1 3">Proteolytically cleaved into two chains alpha and beta that remain associated via a disulfide bond (PubMed:29692406). Cleavage gives rise to a conformation change that activates the enzyme. The same catalytic Cys residue mediates the autoproteolytic cleavage and subsequent hydrolysis of lipid substrates. The beta chain may undergo an additional C-terminal processing (By similarity).</text>
</comment>
<comment type="similarity">
    <text evidence="5">Belongs to the acid ceramidase family.</text>
</comment>
<reference key="1">
    <citation type="submission" date="2013-11" db="EMBL/GenBank/DDBJ databases">
        <authorList>
            <person name="Zheng Y."/>
            <person name="Li E."/>
            <person name="Zhan S."/>
            <person name="Cho Y.S."/>
        </authorList>
    </citation>
    <scope>NUCLEOTIDE SEQUENCE [LARGE SCALE GENOMIC DNA]</scope>
</reference>
<reference key="2">
    <citation type="journal article" date="2018" name="Nat. Commun.">
        <title>Structural basis for the activation of acid ceramidase.</title>
        <authorList>
            <person name="Gebai A."/>
            <person name="Gorelik A."/>
            <person name="Li Z."/>
            <person name="Illes K."/>
            <person name="Nagar B."/>
        </authorList>
    </citation>
    <scope>X-RAY CRYSTALLOGRAPHY (2.34 ANGSTROMS) OF 22-395 OF MUTANT ALA-143</scope>
    <scope>MUTAGENESIS OF CYS-143</scope>
    <scope>ACTIVE SITE</scope>
    <scope>SUBUNIT</scope>
    <scope>GLYCOSYLATION AT ASN-173 AND ASN-259</scope>
    <scope>DISULFIDE BOND</scope>
</reference>
<organism evidence="7">
    <name type="scientific">Balaenoptera acutorostrata scammoni</name>
    <name type="common">North Pacific minke whale</name>
    <name type="synonym">Balaenoptera davidsoni</name>
    <dbReference type="NCBI Taxonomy" id="310752"/>
    <lineage>
        <taxon>Eukaryota</taxon>
        <taxon>Metazoa</taxon>
        <taxon>Chordata</taxon>
        <taxon>Craniata</taxon>
        <taxon>Vertebrata</taxon>
        <taxon>Euteleostomi</taxon>
        <taxon>Mammalia</taxon>
        <taxon>Eutheria</taxon>
        <taxon>Laurasiatheria</taxon>
        <taxon>Artiodactyla</taxon>
        <taxon>Whippomorpha</taxon>
        <taxon>Cetacea</taxon>
        <taxon>Mysticeti</taxon>
        <taxon>Balaenopteridae</taxon>
        <taxon>Balaenoptera</taxon>
    </lineage>
</organism>
<accession>A0A383ZFX3</accession>
<keyword id="KW-0002">3D-structure</keyword>
<keyword id="KW-1015">Disulfide bond</keyword>
<keyword id="KW-0325">Glycoprotein</keyword>
<keyword id="KW-0378">Hydrolase</keyword>
<keyword id="KW-0443">Lipid metabolism</keyword>
<keyword id="KW-0458">Lysosome</keyword>
<keyword id="KW-1185">Reference proteome</keyword>
<keyword id="KW-0964">Secreted</keyword>
<keyword id="KW-0732">Signal</keyword>
<keyword id="KW-0746">Sphingolipid metabolism</keyword>
<keyword id="KW-0865">Zymogen</keyword>
<sequence length="395" mass="44743">MLGRSRLTFVLLSVTVTCSVAQHVPPWTEDCRKSTYPPSGPTYRGPVPWYTINLDLPPYKRWHELMVDKAPALKVIVNYLKNMINAFEPSGKIVQLVDQKLPGLLGSFPGPFEEEMKGIAAVTEIPLGEIILFNIFYEFFTICTSIITEDKEGHLLHARNMDFGVFLGWNVNNNTWVVTEELKPLTVNLDFQRNSKTVFKAAGFAGYVGMLTGFKPGLFSLTLNERFSTNGGFMGVIEWILGKKDAKWIGFIIRSVLENSTSYEEAKTILTKSKILAPAYFILGGSKSGEGCVITRDRVQSLDIYELDPKQGIWYVVQTNYDRWKNPFFLDNRRTPAKMCLNRTTQENISFATMYDVLSTKPVLNKLTVYTALIDVTKGQFETYLRDCPDPCIGW</sequence>
<feature type="signal peptide" evidence="2">
    <location>
        <begin position="1"/>
        <end position="21"/>
    </location>
</feature>
<feature type="chain" id="PRO_5016879903" description="Acid ceramidase" evidence="2">
    <location>
        <begin position="22"/>
        <end position="395"/>
    </location>
</feature>
<feature type="chain" id="PRO_0000446620" description="Acid ceramidase subunit alpha" evidence="1">
    <location>
        <begin position="22"/>
        <end position="142"/>
    </location>
</feature>
<feature type="chain" id="PRO_0000446621" description="Acid ceramidase subunit beta" evidence="1">
    <location>
        <begin position="143"/>
        <end position="395"/>
    </location>
</feature>
<feature type="active site" description="Nucleophile" evidence="3">
    <location>
        <position position="143"/>
    </location>
</feature>
<feature type="site" description="Important for catalytic activity" evidence="1">
    <location>
        <position position="162"/>
    </location>
</feature>
<feature type="site" description="Important for catalytic activity" evidence="1">
    <location>
        <position position="320"/>
    </location>
</feature>
<feature type="site" description="Important for catalytic activity" evidence="1">
    <location>
        <position position="333"/>
    </location>
</feature>
<feature type="glycosylation site" description="N-linked (GlcNAc...) asparagine" evidence="3 9">
    <location>
        <position position="173"/>
    </location>
</feature>
<feature type="glycosylation site" description="N-linked (GlcNAc...) asparagine" evidence="3 9">
    <location>
        <position position="259"/>
    </location>
</feature>
<feature type="glycosylation site" description="N-linked (GlcNAc...) asparagine" evidence="2">
    <location>
        <position position="342"/>
    </location>
</feature>
<feature type="glycosylation site" description="N-linked (GlcNAc...) asparagine" evidence="2">
    <location>
        <position position="348"/>
    </location>
</feature>
<feature type="disulfide bond" description="Interchain (between alpha and beta subunits)" evidence="3 9">
    <location>
        <begin position="31"/>
        <end position="340"/>
    </location>
</feature>
<feature type="disulfide bond" evidence="3 9">
    <location>
        <begin position="388"/>
        <end position="392"/>
    </location>
</feature>
<feature type="mutagenesis site" description="Loss of autoproteolytic cleavage." evidence="3">
    <original>C</original>
    <variation>A</variation>
    <location>
        <position position="143"/>
    </location>
</feature>
<feature type="strand" evidence="10">
    <location>
        <begin position="43"/>
        <end position="46"/>
    </location>
</feature>
<feature type="strand" evidence="10">
    <location>
        <begin position="49"/>
        <end position="53"/>
    </location>
</feature>
<feature type="helix" evidence="10">
    <location>
        <begin position="58"/>
        <end position="60"/>
    </location>
</feature>
<feature type="helix" evidence="10">
    <location>
        <begin position="63"/>
        <end position="66"/>
    </location>
</feature>
<feature type="helix" evidence="10">
    <location>
        <begin position="70"/>
        <end position="87"/>
    </location>
</feature>
<feature type="helix" evidence="10">
    <location>
        <begin position="93"/>
        <end position="99"/>
    </location>
</feature>
<feature type="helix" evidence="10">
    <location>
        <begin position="101"/>
        <end position="107"/>
    </location>
</feature>
<feature type="helix" evidence="10">
    <location>
        <begin position="110"/>
        <end position="123"/>
    </location>
</feature>
<feature type="helix" evidence="10">
    <location>
        <begin position="127"/>
        <end position="136"/>
    </location>
</feature>
<feature type="helix" evidence="10">
    <location>
        <begin position="137"/>
        <end position="140"/>
    </location>
</feature>
<feature type="strand" evidence="10">
    <location>
        <begin position="141"/>
        <end position="149"/>
    </location>
</feature>
<feature type="strand" evidence="10">
    <location>
        <begin position="155"/>
        <end position="164"/>
    </location>
</feature>
<feature type="turn" evidence="10">
    <location>
        <begin position="167"/>
        <end position="169"/>
    </location>
</feature>
<feature type="helix" evidence="10">
    <location>
        <begin position="175"/>
        <end position="182"/>
    </location>
</feature>
<feature type="helix" evidence="10">
    <location>
        <begin position="183"/>
        <end position="185"/>
    </location>
</feature>
<feature type="strand" evidence="10">
    <location>
        <begin position="186"/>
        <end position="193"/>
    </location>
</feature>
<feature type="strand" evidence="10">
    <location>
        <begin position="196"/>
        <end position="204"/>
    </location>
</feature>
<feature type="strand" evidence="10">
    <location>
        <begin position="211"/>
        <end position="215"/>
    </location>
</feature>
<feature type="turn" evidence="10">
    <location>
        <begin position="216"/>
        <end position="218"/>
    </location>
</feature>
<feature type="strand" evidence="10">
    <location>
        <begin position="219"/>
        <end position="225"/>
    </location>
</feature>
<feature type="helix" evidence="10">
    <location>
        <begin position="233"/>
        <end position="239"/>
    </location>
</feature>
<feature type="helix" evidence="10">
    <location>
        <begin position="253"/>
        <end position="259"/>
    </location>
</feature>
<feature type="helix" evidence="10">
    <location>
        <begin position="263"/>
        <end position="272"/>
    </location>
</feature>
<feature type="strand" evidence="10">
    <location>
        <begin position="279"/>
        <end position="287"/>
    </location>
</feature>
<feature type="strand" evidence="10">
    <location>
        <begin position="291"/>
        <end position="296"/>
    </location>
</feature>
<feature type="strand" evidence="10">
    <location>
        <begin position="298"/>
        <end position="306"/>
    </location>
</feature>
<feature type="helix" evidence="10">
    <location>
        <begin position="309"/>
        <end position="311"/>
    </location>
</feature>
<feature type="strand" evidence="10">
    <location>
        <begin position="315"/>
        <end position="318"/>
    </location>
</feature>
<feature type="helix" evidence="10">
    <location>
        <begin position="334"/>
        <end position="344"/>
    </location>
</feature>
<feature type="helix" evidence="10">
    <location>
        <begin position="346"/>
        <end position="348"/>
    </location>
</feature>
<feature type="helix" evidence="10">
    <location>
        <begin position="351"/>
        <end position="357"/>
    </location>
</feature>
<feature type="turn" evidence="10">
    <location>
        <begin position="361"/>
        <end position="363"/>
    </location>
</feature>
<feature type="strand" evidence="10">
    <location>
        <begin position="368"/>
        <end position="375"/>
    </location>
</feature>
<feature type="turn" evidence="10">
    <location>
        <begin position="376"/>
        <end position="379"/>
    </location>
</feature>
<feature type="strand" evidence="10">
    <location>
        <begin position="380"/>
        <end position="386"/>
    </location>
</feature>
<protein>
    <recommendedName>
        <fullName evidence="4">Acid ceramidase</fullName>
        <shortName>AC</shortName>
        <shortName evidence="4">ACDase</shortName>
        <shortName>Acid CDase</shortName>
        <ecNumber evidence="1">3.5.1.23</ecNumber>
    </recommendedName>
    <alternativeName>
        <fullName>Acylsphingosine deacylase</fullName>
    </alternativeName>
    <alternativeName>
        <fullName evidence="1">N-acylethanolamine hydrolase ASAH1</fullName>
        <ecNumber evidence="1">3.5.1.-</ecNumber>
    </alternativeName>
    <alternativeName>
        <fullName>N-acylsphingosine amidohydrolase</fullName>
    </alternativeName>
    <component>
        <recommendedName>
            <fullName evidence="6">Acid ceramidase subunit alpha</fullName>
        </recommendedName>
    </component>
    <component>
        <recommendedName>
            <fullName evidence="6">Acid ceramidase subunit beta</fullName>
        </recommendedName>
    </component>
</protein>
<name>ASAH1_BALAS</name>